<protein>
    <recommendedName>
        <fullName evidence="1">Catalase-peroxidase</fullName>
        <shortName evidence="1">CP</shortName>
        <ecNumber evidence="1">1.11.1.21</ecNumber>
    </recommendedName>
    <alternativeName>
        <fullName evidence="1">Peroxidase/catalase</fullName>
    </alternativeName>
</protein>
<keyword id="KW-0963">Cytoplasm</keyword>
<keyword id="KW-0349">Heme</keyword>
<keyword id="KW-0376">Hydrogen peroxide</keyword>
<keyword id="KW-0408">Iron</keyword>
<keyword id="KW-0479">Metal-binding</keyword>
<keyword id="KW-0560">Oxidoreductase</keyword>
<keyword id="KW-0575">Peroxidase</keyword>
<keyword id="KW-1185">Reference proteome</keyword>
<feature type="chain" id="PRO_0000354107" description="Catalase-peroxidase">
    <location>
        <begin position="1"/>
        <end position="759"/>
    </location>
</feature>
<feature type="region of interest" description="Disordered" evidence="2">
    <location>
        <begin position="1"/>
        <end position="24"/>
    </location>
</feature>
<feature type="active site" description="Proton acceptor" evidence="1">
    <location>
        <position position="97"/>
    </location>
</feature>
<feature type="binding site" description="axial binding residue" evidence="1">
    <location>
        <position position="283"/>
    </location>
    <ligand>
        <name>heme b</name>
        <dbReference type="ChEBI" id="CHEBI:60344"/>
    </ligand>
    <ligandPart>
        <name>Fe</name>
        <dbReference type="ChEBI" id="CHEBI:18248"/>
    </ligandPart>
</feature>
<feature type="site" description="Transition state stabilizer" evidence="1">
    <location>
        <position position="93"/>
    </location>
</feature>
<feature type="cross-link" description="Tryptophyl-tyrosyl-methioninium (Trp-Tyr) (with M-268)" evidence="1">
    <location>
        <begin position="96"/>
        <end position="242"/>
    </location>
</feature>
<feature type="cross-link" description="Tryptophyl-tyrosyl-methioninium (Tyr-Met) (with W-96)" evidence="1">
    <location>
        <begin position="242"/>
        <end position="268"/>
    </location>
</feature>
<organism>
    <name type="scientific">Neosartorya fischeri (strain ATCC 1020 / DSM 3700 / CBS 544.65 / FGSC A1164 / JCM 1740 / NRRL 181 / WB 181)</name>
    <name type="common">Aspergillus fischerianus</name>
    <dbReference type="NCBI Taxonomy" id="331117"/>
    <lineage>
        <taxon>Eukaryota</taxon>
        <taxon>Fungi</taxon>
        <taxon>Dikarya</taxon>
        <taxon>Ascomycota</taxon>
        <taxon>Pezizomycotina</taxon>
        <taxon>Eurotiomycetes</taxon>
        <taxon>Eurotiomycetidae</taxon>
        <taxon>Eurotiales</taxon>
        <taxon>Aspergillaceae</taxon>
        <taxon>Aspergillus</taxon>
        <taxon>Aspergillus subgen. Fumigati</taxon>
    </lineage>
</organism>
<accession>A1DAL6</accession>
<reference key="1">
    <citation type="journal article" date="2008" name="PLoS Genet.">
        <title>Genomic islands in the pathogenic filamentous fungus Aspergillus fumigatus.</title>
        <authorList>
            <person name="Fedorova N.D."/>
            <person name="Khaldi N."/>
            <person name="Joardar V.S."/>
            <person name="Maiti R."/>
            <person name="Amedeo P."/>
            <person name="Anderson M.J."/>
            <person name="Crabtree J."/>
            <person name="Silva J.C."/>
            <person name="Badger J.H."/>
            <person name="Albarraq A."/>
            <person name="Angiuoli S."/>
            <person name="Bussey H."/>
            <person name="Bowyer P."/>
            <person name="Cotty P.J."/>
            <person name="Dyer P.S."/>
            <person name="Egan A."/>
            <person name="Galens K."/>
            <person name="Fraser-Liggett C.M."/>
            <person name="Haas B.J."/>
            <person name="Inman J.M."/>
            <person name="Kent R."/>
            <person name="Lemieux S."/>
            <person name="Malavazi I."/>
            <person name="Orvis J."/>
            <person name="Roemer T."/>
            <person name="Ronning C.M."/>
            <person name="Sundaram J.P."/>
            <person name="Sutton G."/>
            <person name="Turner G."/>
            <person name="Venter J.C."/>
            <person name="White O.R."/>
            <person name="Whitty B.R."/>
            <person name="Youngman P."/>
            <person name="Wolfe K.H."/>
            <person name="Goldman G.H."/>
            <person name="Wortman J.R."/>
            <person name="Jiang B."/>
            <person name="Denning D.W."/>
            <person name="Nierman W.C."/>
        </authorList>
    </citation>
    <scope>NUCLEOTIDE SEQUENCE [LARGE SCALE GENOMIC DNA]</scope>
    <source>
        <strain>ATCC 1020 / DSM 3700 / CBS 544.65 / FGSC A1164 / JCM 1740 / NRRL 181 / WB 181</strain>
    </source>
</reference>
<name>KATG_NEOFI</name>
<proteinExistence type="inferred from homology"/>
<gene>
    <name evidence="1" type="primary">katG</name>
    <name type="ORF">NFIA_095260</name>
</gene>
<dbReference type="EC" id="1.11.1.21" evidence="1"/>
<dbReference type="EMBL" id="DS027694">
    <property type="protein sequence ID" value="EAW19906.1"/>
    <property type="molecule type" value="Genomic_DNA"/>
</dbReference>
<dbReference type="RefSeq" id="XP_001261803.1">
    <property type="nucleotide sequence ID" value="XM_001261802.1"/>
</dbReference>
<dbReference type="SMR" id="A1DAL6"/>
<dbReference type="STRING" id="331117.A1DAL6"/>
<dbReference type="PeroxiBase" id="3412">
    <property type="entry name" value="NfCP01"/>
</dbReference>
<dbReference type="EnsemblFungi" id="EAW19906">
    <property type="protein sequence ID" value="EAW19906"/>
    <property type="gene ID" value="NFIA_095260"/>
</dbReference>
<dbReference type="GeneID" id="4588896"/>
<dbReference type="KEGG" id="nfi:NFIA_095260"/>
<dbReference type="VEuPathDB" id="FungiDB:NFIA_095260"/>
<dbReference type="eggNOG" id="ENOG502QTDY">
    <property type="taxonomic scope" value="Eukaryota"/>
</dbReference>
<dbReference type="HOGENOM" id="CLU_025424_2_0_1"/>
<dbReference type="OMA" id="GPETTWL"/>
<dbReference type="OrthoDB" id="407695at2759"/>
<dbReference type="Proteomes" id="UP000006702">
    <property type="component" value="Unassembled WGS sequence"/>
</dbReference>
<dbReference type="GO" id="GO:0005829">
    <property type="term" value="C:cytosol"/>
    <property type="evidence" value="ECO:0007669"/>
    <property type="project" value="TreeGrafter"/>
</dbReference>
<dbReference type="GO" id="GO:0004096">
    <property type="term" value="F:catalase activity"/>
    <property type="evidence" value="ECO:0007669"/>
    <property type="project" value="UniProtKB-UniRule"/>
</dbReference>
<dbReference type="GO" id="GO:0020037">
    <property type="term" value="F:heme binding"/>
    <property type="evidence" value="ECO:0007669"/>
    <property type="project" value="InterPro"/>
</dbReference>
<dbReference type="GO" id="GO:0046872">
    <property type="term" value="F:metal ion binding"/>
    <property type="evidence" value="ECO:0007669"/>
    <property type="project" value="UniProtKB-KW"/>
</dbReference>
<dbReference type="GO" id="GO:0070301">
    <property type="term" value="P:cellular response to hydrogen peroxide"/>
    <property type="evidence" value="ECO:0007669"/>
    <property type="project" value="TreeGrafter"/>
</dbReference>
<dbReference type="GO" id="GO:0042744">
    <property type="term" value="P:hydrogen peroxide catabolic process"/>
    <property type="evidence" value="ECO:0007669"/>
    <property type="project" value="UniProtKB-KW"/>
</dbReference>
<dbReference type="CDD" id="cd00649">
    <property type="entry name" value="catalase_peroxidase_1"/>
    <property type="match status" value="1"/>
</dbReference>
<dbReference type="CDD" id="cd08200">
    <property type="entry name" value="catalase_peroxidase_2"/>
    <property type="match status" value="1"/>
</dbReference>
<dbReference type="FunFam" id="1.10.420.10:FF:000002">
    <property type="entry name" value="Catalase-peroxidase"/>
    <property type="match status" value="1"/>
</dbReference>
<dbReference type="FunFam" id="1.10.420.10:FF:000004">
    <property type="entry name" value="Catalase-peroxidase"/>
    <property type="match status" value="1"/>
</dbReference>
<dbReference type="FunFam" id="1.10.520.10:FF:000002">
    <property type="entry name" value="Catalase-peroxidase"/>
    <property type="match status" value="1"/>
</dbReference>
<dbReference type="Gene3D" id="1.10.520.10">
    <property type="match status" value="2"/>
</dbReference>
<dbReference type="Gene3D" id="1.10.420.10">
    <property type="entry name" value="Peroxidase, domain 2"/>
    <property type="match status" value="2"/>
</dbReference>
<dbReference type="HAMAP" id="MF_01961">
    <property type="entry name" value="Catal_peroxid"/>
    <property type="match status" value="1"/>
</dbReference>
<dbReference type="InterPro" id="IPR000763">
    <property type="entry name" value="Catalase_peroxidase"/>
</dbReference>
<dbReference type="InterPro" id="IPR002016">
    <property type="entry name" value="Haem_peroxidase"/>
</dbReference>
<dbReference type="InterPro" id="IPR010255">
    <property type="entry name" value="Haem_peroxidase_sf"/>
</dbReference>
<dbReference type="InterPro" id="IPR019794">
    <property type="entry name" value="Peroxidases_AS"/>
</dbReference>
<dbReference type="InterPro" id="IPR019793">
    <property type="entry name" value="Peroxidases_heam-ligand_BS"/>
</dbReference>
<dbReference type="NCBIfam" id="TIGR00198">
    <property type="entry name" value="cat_per_HPI"/>
    <property type="match status" value="1"/>
</dbReference>
<dbReference type="NCBIfam" id="NF011635">
    <property type="entry name" value="PRK15061.1"/>
    <property type="match status" value="1"/>
</dbReference>
<dbReference type="PANTHER" id="PTHR30555:SF0">
    <property type="entry name" value="CATALASE-PEROXIDASE"/>
    <property type="match status" value="1"/>
</dbReference>
<dbReference type="PANTHER" id="PTHR30555">
    <property type="entry name" value="HYDROPEROXIDASE I, BIFUNCTIONAL CATALASE-PEROXIDASE"/>
    <property type="match status" value="1"/>
</dbReference>
<dbReference type="Pfam" id="PF00141">
    <property type="entry name" value="peroxidase"/>
    <property type="match status" value="2"/>
</dbReference>
<dbReference type="PRINTS" id="PR00460">
    <property type="entry name" value="BPEROXIDASE"/>
</dbReference>
<dbReference type="PRINTS" id="PR00458">
    <property type="entry name" value="PEROXIDASE"/>
</dbReference>
<dbReference type="SUPFAM" id="SSF48113">
    <property type="entry name" value="Heme-dependent peroxidases"/>
    <property type="match status" value="2"/>
</dbReference>
<dbReference type="PROSITE" id="PS00435">
    <property type="entry name" value="PEROXIDASE_1"/>
    <property type="match status" value="1"/>
</dbReference>
<dbReference type="PROSITE" id="PS00436">
    <property type="entry name" value="PEROXIDASE_2"/>
    <property type="match status" value="1"/>
</dbReference>
<dbReference type="PROSITE" id="PS50873">
    <property type="entry name" value="PEROXIDASE_4"/>
    <property type="match status" value="2"/>
</dbReference>
<comment type="function">
    <text evidence="1">Bifunctional enzyme with both catalase and broad-spectrum peroxidase activity.</text>
</comment>
<comment type="catalytic activity">
    <reaction evidence="1">
        <text>H2O2 + AH2 = A + 2 H2O</text>
        <dbReference type="Rhea" id="RHEA:30275"/>
        <dbReference type="ChEBI" id="CHEBI:13193"/>
        <dbReference type="ChEBI" id="CHEBI:15377"/>
        <dbReference type="ChEBI" id="CHEBI:16240"/>
        <dbReference type="ChEBI" id="CHEBI:17499"/>
        <dbReference type="EC" id="1.11.1.21"/>
    </reaction>
</comment>
<comment type="catalytic activity">
    <reaction evidence="1">
        <text>2 H2O2 = O2 + 2 H2O</text>
        <dbReference type="Rhea" id="RHEA:20309"/>
        <dbReference type="ChEBI" id="CHEBI:15377"/>
        <dbReference type="ChEBI" id="CHEBI:15379"/>
        <dbReference type="ChEBI" id="CHEBI:16240"/>
        <dbReference type="EC" id="1.11.1.21"/>
    </reaction>
</comment>
<comment type="cofactor">
    <cofactor evidence="1">
        <name>heme b</name>
        <dbReference type="ChEBI" id="CHEBI:60344"/>
    </cofactor>
    <text evidence="1">Binds 1 heme b (iron(II)-protoporphyrin IX) group per monomer.</text>
</comment>
<comment type="subunit">
    <text evidence="1">Homodimer or homotetramer.</text>
</comment>
<comment type="subcellular location">
    <subcellularLocation>
        <location evidence="1">Cytoplasm</location>
    </subcellularLocation>
</comment>
<comment type="PTM">
    <text evidence="1">Formation of the three residue Trp-Tyr-Met cross-link is important for the catalase, but not the peroxidase activity of the enzyme.</text>
</comment>
<comment type="similarity">
    <text evidence="1">Belongs to the peroxidase family. Peroxidase/catalase subfamily.</text>
</comment>
<sequence>MTQDKCPFKEQPSQPNFAGGGTSNKDWWPDRLKLNILRQHTAVSNPLDADFDYAAAFKSLDYEALKKDLRALMTDSQDWWPADFGHYGGLFIRMAWHSAGTYRVFDGRGGAGQGQQRFAPLNSWPDNVSLDKARRLLWPIKQKYGNKISWADLMILTGNVALESMGFKTFGFAGGRPDTWEADEATYWGRETTWLGNDARYAKGFSGSDKRGTLIADEDSHKTTHSRELETPLAAAHMGLIYVNPEGPDGNPDPIAAAHDIRDTFGRMAMNDEETVALIAGGHTFGKTHGAAPADNVGKEPEAAGLEAQGLGWANKHGSGKGPDTITSGLEVTWTKTPTQWSNNFLEYLFKFEWELTKSPAGAHQWVAKNADEIIPHAYDASKKRKPTMLTTDLSLRFDPAYEKIARRFLEHPDQFADAFARAWFKLTHRDMGPRARYLGPEVPSEVLIWQDPIPAVNHPLVDASDIATLKDEILASGVPFRSFISTAWAAASTFRGSDKRGGANGARIRLAPQRDWEANNQPWLREALSALEAVQSRFNSRGDGKKVSLADLIVLAGCAAVEKAAQDAGHPIKVPFVPGRMDASQEETDVQSFSHMEPFADGFRNFAKGPARPRAEHYLVDKAQLLNLSAPEMTVLVGGLRVLNTNYDGSAHGVFTSRPGALSNDFFVHLLDMNTAWKDAGNGELFEGSDRKTGGKKWTATRADLVFGSNAELRAIAEVYASNDGDMKFVKDFVAAWNKVMNLDRFDLKGKQTIPARL</sequence>
<evidence type="ECO:0000255" key="1">
    <source>
        <dbReference type="HAMAP-Rule" id="MF_03108"/>
    </source>
</evidence>
<evidence type="ECO:0000256" key="2">
    <source>
        <dbReference type="SAM" id="MobiDB-lite"/>
    </source>
</evidence>